<accession>P89479</accession>
<organism>
    <name type="scientific">Human herpesvirus 2 (strain HG52)</name>
    <name type="common">HHV-2</name>
    <name type="synonym">Human herpes simplex virus 2</name>
    <dbReference type="NCBI Taxonomy" id="10315"/>
    <lineage>
        <taxon>Viruses</taxon>
        <taxon>Duplodnaviria</taxon>
        <taxon>Heunggongvirae</taxon>
        <taxon>Peploviricota</taxon>
        <taxon>Herviviricetes</taxon>
        <taxon>Herpesvirales</taxon>
        <taxon>Orthoherpesviridae</taxon>
        <taxon>Alphaherpesvirinae</taxon>
        <taxon>Simplexvirus</taxon>
        <taxon>Simplexvirus humanalpha2</taxon>
        <taxon>Human herpesvirus 2</taxon>
    </lineage>
</organism>
<dbReference type="EMBL" id="Z86099">
    <property type="protein sequence ID" value="CAB06719.1"/>
    <property type="molecule type" value="Genomic_DNA"/>
</dbReference>
<dbReference type="RefSeq" id="YP_009137224.1">
    <property type="nucleotide sequence ID" value="NC_001798.2"/>
</dbReference>
<dbReference type="DNASU" id="1487352"/>
<dbReference type="GeneID" id="1487352"/>
<dbReference type="KEGG" id="vg:1487352"/>
<dbReference type="Proteomes" id="UP000001874">
    <property type="component" value="Segment"/>
</dbReference>
<dbReference type="GO" id="GO:0030430">
    <property type="term" value="C:host cell cytoplasm"/>
    <property type="evidence" value="ECO:0007669"/>
    <property type="project" value="UniProtKB-SubCell"/>
</dbReference>
<dbReference type="GO" id="GO:0044196">
    <property type="term" value="C:host cell nucleolus"/>
    <property type="evidence" value="ECO:0007669"/>
    <property type="project" value="UniProtKB-SubCell"/>
</dbReference>
<dbReference type="GO" id="GO:0003677">
    <property type="term" value="F:DNA binding"/>
    <property type="evidence" value="ECO:0007669"/>
    <property type="project" value="UniProtKB-KW"/>
</dbReference>
<dbReference type="GO" id="GO:0030291">
    <property type="term" value="F:protein serine/threonine kinase inhibitor activity"/>
    <property type="evidence" value="ECO:0007669"/>
    <property type="project" value="UniProtKB-KW"/>
</dbReference>
<dbReference type="GO" id="GO:0003723">
    <property type="term" value="F:RNA binding"/>
    <property type="evidence" value="ECO:0007669"/>
    <property type="project" value="UniProtKB-KW"/>
</dbReference>
<dbReference type="GO" id="GO:0140321">
    <property type="term" value="P:symbiont-mediated suppression of host autophagy"/>
    <property type="evidence" value="ECO:0007669"/>
    <property type="project" value="UniProtKB-KW"/>
</dbReference>
<dbReference type="GO" id="GO:0039554">
    <property type="term" value="P:symbiont-mediated suppression of host cytoplasmic pattern recognition receptor signaling pathway via inhibition of MDA-5 activity"/>
    <property type="evidence" value="ECO:0007669"/>
    <property type="project" value="UniProtKB-KW"/>
</dbReference>
<dbReference type="GO" id="GO:0039540">
    <property type="term" value="P:symbiont-mediated suppression of host cytoplasmic pattern recognition receptor signaling pathway via inhibition of RIG-I activity"/>
    <property type="evidence" value="ECO:0007669"/>
    <property type="project" value="UniProtKB-KW"/>
</dbReference>
<dbReference type="GO" id="GO:0039580">
    <property type="term" value="P:symbiont-mediated suppression of host PKR/eIFalpha signaling"/>
    <property type="evidence" value="ECO:0007669"/>
    <property type="project" value="UniProtKB-KW"/>
</dbReference>
<dbReference type="GO" id="GO:0039502">
    <property type="term" value="P:symbiont-mediated suppression of host type I interferon-mediated signaling pathway"/>
    <property type="evidence" value="ECO:0007669"/>
    <property type="project" value="UniProtKB-KW"/>
</dbReference>
<organismHost>
    <name type="scientific">Homo sapiens</name>
    <name type="common">Human</name>
    <dbReference type="NCBI Taxonomy" id="9606"/>
</organismHost>
<name>RNB_HHV2H</name>
<sequence>MASGVSPAHPQTPVGAGSRDLSLKGTPSDGMQPRGADTLEGHSLPTDGPPHRGGDHDPAAGKRGDSGLLRVCAALSIPKPSEAVRPSRIPRAPRVPREPRVPREPREPRVPRSPREPRVPRIPRDPRPPRPPRVPREPRPPREPRATRGLA</sequence>
<gene>
    <name type="primary">US11</name>
</gene>
<comment type="function">
    <text evidence="1">Plays a role in the inhibition of host immune response. Participates in the inhibition of host autophagy by interacting with and inhibiting host PKR/EIF2AK2. This interaction also prevents the interferon-induced shut down of protein synthesis following viral infection. Downmodulates the host RLR signaling pathway via direct interaction with host RIGI and IFIH1. May also participate in nuclear egress of viral particles through interactions with host NCL and regulation of the viral UL34 mRNA.</text>
</comment>
<comment type="subunit">
    <text evidence="1">Associates with RNA derived from the 60S ribosomal subunits. Seems to form large heterogeneous polymers of up to 200 identical subunits in the cytoplasm. Interacts with host EIF2AK2. Interacts with host NCL. Interacts with host RIGI; this interaction prevents RIGI binding to host MAVS. Interacts with host IFIH1; this interaction prevents host IFH1 binding to MAVS.</text>
</comment>
<comment type="subcellular location">
    <subcellularLocation>
        <location evidence="1">Host nucleus</location>
        <location evidence="1">Host nucleolus</location>
    </subcellularLocation>
    <subcellularLocation>
        <location evidence="1">Host cytoplasm</location>
    </subcellularLocation>
    <text evidence="1">Following infection, it is released into the cell cytoplasm.</text>
</comment>
<comment type="domain">
    <text evidence="1">The N-terminal tetrapeptide may be responsible for virion incorporation.</text>
</comment>
<comment type="domain">
    <text evidence="1">The C-terminal half, rich in Arg and Pro residues, seems to be responsible for the RNA-binding activity, and for the association with ribosomes and the localization to the nucleolus. This region may adopt a poly-L-proline II helix secondary structure.</text>
</comment>
<comment type="PTM">
    <text evidence="1">May be phosphorylated on Ser residues by host kinases.</text>
</comment>
<comment type="similarity">
    <text evidence="3">Belongs to the simplex virus US11 protein family.</text>
</comment>
<feature type="chain" id="PRO_0000115742" description="Probable RNA-binding protein">
    <location>
        <begin position="1"/>
        <end position="151"/>
    </location>
</feature>
<feature type="repeat" description="1">
    <location>
        <begin position="90"/>
        <end position="95"/>
    </location>
</feature>
<feature type="repeat" description="2">
    <location>
        <begin position="96"/>
        <end position="101"/>
    </location>
</feature>
<feature type="repeat" description="3">
    <location>
        <begin position="102"/>
        <end position="104"/>
    </location>
</feature>
<feature type="repeat" description="4">
    <location>
        <begin position="105"/>
        <end position="110"/>
    </location>
</feature>
<feature type="repeat" description="5">
    <location>
        <begin position="111"/>
        <end position="116"/>
    </location>
</feature>
<feature type="repeat" description="6">
    <location>
        <begin position="117"/>
        <end position="122"/>
    </location>
</feature>
<feature type="repeat" description="7">
    <location>
        <begin position="123"/>
        <end position="128"/>
    </location>
</feature>
<feature type="repeat" description="8">
    <location>
        <begin position="129"/>
        <end position="130"/>
    </location>
</feature>
<feature type="repeat" description="9">
    <location>
        <begin position="131"/>
        <end position="134"/>
    </location>
</feature>
<feature type="repeat" description="10">
    <location>
        <begin position="135"/>
        <end position="140"/>
    </location>
</feature>
<feature type="repeat" description="11">
    <location>
        <begin position="141"/>
        <end position="146"/>
    </location>
</feature>
<feature type="region of interest" description="Disordered" evidence="2">
    <location>
        <begin position="1"/>
        <end position="151"/>
    </location>
</feature>
<feature type="region of interest" description="11 X 6 AA tandem repeats">
    <location>
        <begin position="90"/>
        <end position="146"/>
    </location>
</feature>
<feature type="compositionally biased region" description="Basic and acidic residues" evidence="2">
    <location>
        <begin position="49"/>
        <end position="65"/>
    </location>
</feature>
<feature type="compositionally biased region" description="Basic and acidic residues" evidence="2">
    <location>
        <begin position="95"/>
        <end position="151"/>
    </location>
</feature>
<evidence type="ECO:0000250" key="1">
    <source>
        <dbReference type="UniProtKB" id="P04487"/>
    </source>
</evidence>
<evidence type="ECO:0000256" key="2">
    <source>
        <dbReference type="SAM" id="MobiDB-lite"/>
    </source>
</evidence>
<evidence type="ECO:0000305" key="3"/>
<keyword id="KW-0238">DNA-binding</keyword>
<keyword id="KW-1035">Host cytoplasm</keyword>
<keyword id="KW-1048">Host nucleus</keyword>
<keyword id="KW-0945">Host-virus interaction</keyword>
<keyword id="KW-1083">Inhibition of host autophagy by virus</keyword>
<keyword id="KW-1090">Inhibition of host innate immune response by virus</keyword>
<keyword id="KW-1114">Inhibition of host interferon signaling pathway by virus</keyword>
<keyword id="KW-1089">Inhibition of host MDA5 by virus</keyword>
<keyword id="KW-1102">Inhibition of host PKR by virus</keyword>
<keyword id="KW-1088">Inhibition of host RIG-I by virus</keyword>
<keyword id="KW-1113">Inhibition of host RLR pathway by virus</keyword>
<keyword id="KW-0922">Interferon antiviral system evasion</keyword>
<keyword id="KW-0426">Late protein</keyword>
<keyword id="KW-0597">Phosphoprotein</keyword>
<keyword id="KW-1185">Reference proteome</keyword>
<keyword id="KW-0677">Repeat</keyword>
<keyword id="KW-0694">RNA-binding</keyword>
<keyword id="KW-0899">Viral immunoevasion</keyword>
<protein>
    <recommendedName>
        <fullName>Probable RNA-binding protein</fullName>
    </recommendedName>
</protein>
<reference key="1">
    <citation type="journal article" date="1998" name="J. Virol.">
        <title>The genome sequence of herpes simplex virus type 2.</title>
        <authorList>
            <person name="Dolan A."/>
            <person name="Jamieson F.E."/>
            <person name="Cunningham C."/>
            <person name="Barnett B.C."/>
            <person name="McGeoch D.J."/>
        </authorList>
    </citation>
    <scope>NUCLEOTIDE SEQUENCE [LARGE SCALE GENOMIC DNA]</scope>
</reference>
<proteinExistence type="inferred from homology"/>